<organism>
    <name type="scientific">Shewanella sp. (strain MR-4)</name>
    <dbReference type="NCBI Taxonomy" id="60480"/>
    <lineage>
        <taxon>Bacteria</taxon>
        <taxon>Pseudomonadati</taxon>
        <taxon>Pseudomonadota</taxon>
        <taxon>Gammaproteobacteria</taxon>
        <taxon>Alteromonadales</taxon>
        <taxon>Shewanellaceae</taxon>
        <taxon>Shewanella</taxon>
    </lineage>
</organism>
<evidence type="ECO:0000255" key="1">
    <source>
        <dbReference type="HAMAP-Rule" id="MF_00019"/>
    </source>
</evidence>
<sequence>MTSLTLALDAMGGDHGPHVTVPAALRALKSHSSLKIILVGDKTEIDVYLRQAEQPLLSRIEVIHTDEVVSMSDRPVHALRTRKNSSMRLSIELVRDGRAAACVSAGNTGALMAMAKVLLKTLPGVDRPALVSCLPSVTQKPVYLLDLGANISCDSETLFQFAVMGSVLCEAVDKKSRPKVALLNVGTEEIKGNDQVQQAAQILQNTDQINYTGFIEGDEIYSGNVDVIVCDGFVGNITLKTSEGIAKLLVHQLKRGLTQGFFVRFLAKLIAPRIQAVLSQMNPDHYNGASLIGLRGIVVKSHGNADETAYLQAINLAVTEAQRRLPEMIKDRLESILLDINN</sequence>
<protein>
    <recommendedName>
        <fullName evidence="1">Phosphate acyltransferase</fullName>
        <ecNumber evidence="1">2.3.1.274</ecNumber>
    </recommendedName>
    <alternativeName>
        <fullName evidence="1">Acyl-ACP phosphotransacylase</fullName>
    </alternativeName>
    <alternativeName>
        <fullName evidence="1">Acyl-[acyl-carrier-protein]--phosphate acyltransferase</fullName>
    </alternativeName>
    <alternativeName>
        <fullName evidence="1">Phosphate-acyl-ACP acyltransferase</fullName>
    </alternativeName>
</protein>
<gene>
    <name evidence="1" type="primary">plsX</name>
    <name type="ordered locus">Shewmr4_2399</name>
</gene>
<keyword id="KW-0963">Cytoplasm</keyword>
<keyword id="KW-0444">Lipid biosynthesis</keyword>
<keyword id="KW-0443">Lipid metabolism</keyword>
<keyword id="KW-0594">Phospholipid biosynthesis</keyword>
<keyword id="KW-1208">Phospholipid metabolism</keyword>
<keyword id="KW-0808">Transferase</keyword>
<proteinExistence type="inferred from homology"/>
<accession>Q0HHJ7</accession>
<dbReference type="EC" id="2.3.1.274" evidence="1"/>
<dbReference type="EMBL" id="CP000446">
    <property type="protein sequence ID" value="ABI39470.1"/>
    <property type="molecule type" value="Genomic_DNA"/>
</dbReference>
<dbReference type="RefSeq" id="WP_011623155.1">
    <property type="nucleotide sequence ID" value="NC_008321.1"/>
</dbReference>
<dbReference type="SMR" id="Q0HHJ7"/>
<dbReference type="KEGG" id="she:Shewmr4_2399"/>
<dbReference type="HOGENOM" id="CLU_039379_1_0_6"/>
<dbReference type="UniPathway" id="UPA00085"/>
<dbReference type="GO" id="GO:0005737">
    <property type="term" value="C:cytoplasm"/>
    <property type="evidence" value="ECO:0007669"/>
    <property type="project" value="UniProtKB-SubCell"/>
</dbReference>
<dbReference type="GO" id="GO:0043811">
    <property type="term" value="F:phosphate:acyl-[acyl carrier protein] acyltransferase activity"/>
    <property type="evidence" value="ECO:0007669"/>
    <property type="project" value="UniProtKB-UniRule"/>
</dbReference>
<dbReference type="GO" id="GO:0006633">
    <property type="term" value="P:fatty acid biosynthetic process"/>
    <property type="evidence" value="ECO:0007669"/>
    <property type="project" value="UniProtKB-UniRule"/>
</dbReference>
<dbReference type="GO" id="GO:0008654">
    <property type="term" value="P:phospholipid biosynthetic process"/>
    <property type="evidence" value="ECO:0007669"/>
    <property type="project" value="UniProtKB-KW"/>
</dbReference>
<dbReference type="Gene3D" id="3.40.718.10">
    <property type="entry name" value="Isopropylmalate Dehydrogenase"/>
    <property type="match status" value="1"/>
</dbReference>
<dbReference type="HAMAP" id="MF_00019">
    <property type="entry name" value="PlsX"/>
    <property type="match status" value="1"/>
</dbReference>
<dbReference type="InterPro" id="IPR003664">
    <property type="entry name" value="FA_synthesis"/>
</dbReference>
<dbReference type="InterPro" id="IPR012281">
    <property type="entry name" value="Phospholipid_synth_PlsX-like"/>
</dbReference>
<dbReference type="NCBIfam" id="TIGR00182">
    <property type="entry name" value="plsX"/>
    <property type="match status" value="1"/>
</dbReference>
<dbReference type="PANTHER" id="PTHR30100">
    <property type="entry name" value="FATTY ACID/PHOSPHOLIPID SYNTHESIS PROTEIN PLSX"/>
    <property type="match status" value="1"/>
</dbReference>
<dbReference type="PANTHER" id="PTHR30100:SF1">
    <property type="entry name" value="PHOSPHATE ACYLTRANSFERASE"/>
    <property type="match status" value="1"/>
</dbReference>
<dbReference type="Pfam" id="PF02504">
    <property type="entry name" value="FA_synthesis"/>
    <property type="match status" value="1"/>
</dbReference>
<dbReference type="PIRSF" id="PIRSF002465">
    <property type="entry name" value="Phsphlp_syn_PlsX"/>
    <property type="match status" value="1"/>
</dbReference>
<dbReference type="SUPFAM" id="SSF53659">
    <property type="entry name" value="Isocitrate/Isopropylmalate dehydrogenase-like"/>
    <property type="match status" value="1"/>
</dbReference>
<name>PLSX_SHESM</name>
<comment type="function">
    <text evidence="1">Catalyzes the reversible formation of acyl-phosphate (acyl-PO(4)) from acyl-[acyl-carrier-protein] (acyl-ACP). This enzyme utilizes acyl-ACP as fatty acyl donor, but not acyl-CoA.</text>
</comment>
<comment type="catalytic activity">
    <reaction evidence="1">
        <text>a fatty acyl-[ACP] + phosphate = an acyl phosphate + holo-[ACP]</text>
        <dbReference type="Rhea" id="RHEA:42292"/>
        <dbReference type="Rhea" id="RHEA-COMP:9685"/>
        <dbReference type="Rhea" id="RHEA-COMP:14125"/>
        <dbReference type="ChEBI" id="CHEBI:43474"/>
        <dbReference type="ChEBI" id="CHEBI:59918"/>
        <dbReference type="ChEBI" id="CHEBI:64479"/>
        <dbReference type="ChEBI" id="CHEBI:138651"/>
        <dbReference type="EC" id="2.3.1.274"/>
    </reaction>
</comment>
<comment type="pathway">
    <text evidence="1">Lipid metabolism; phospholipid metabolism.</text>
</comment>
<comment type="subunit">
    <text evidence="1">Homodimer. Probably interacts with PlsY.</text>
</comment>
<comment type="subcellular location">
    <subcellularLocation>
        <location evidence="1">Cytoplasm</location>
    </subcellularLocation>
    <text evidence="1">Associated with the membrane possibly through PlsY.</text>
</comment>
<comment type="similarity">
    <text evidence="1">Belongs to the PlsX family.</text>
</comment>
<feature type="chain" id="PRO_1000001830" description="Phosphate acyltransferase">
    <location>
        <begin position="1"/>
        <end position="342"/>
    </location>
</feature>
<reference key="1">
    <citation type="submission" date="2006-08" db="EMBL/GenBank/DDBJ databases">
        <title>Complete sequence of Shewanella sp. MR-4.</title>
        <authorList>
            <consortium name="US DOE Joint Genome Institute"/>
            <person name="Copeland A."/>
            <person name="Lucas S."/>
            <person name="Lapidus A."/>
            <person name="Barry K."/>
            <person name="Detter J.C."/>
            <person name="Glavina del Rio T."/>
            <person name="Hammon N."/>
            <person name="Israni S."/>
            <person name="Dalin E."/>
            <person name="Tice H."/>
            <person name="Pitluck S."/>
            <person name="Kiss H."/>
            <person name="Brettin T."/>
            <person name="Bruce D."/>
            <person name="Han C."/>
            <person name="Tapia R."/>
            <person name="Gilna P."/>
            <person name="Schmutz J."/>
            <person name="Larimer F."/>
            <person name="Land M."/>
            <person name="Hauser L."/>
            <person name="Kyrpides N."/>
            <person name="Mikhailova N."/>
            <person name="Nealson K."/>
            <person name="Konstantinidis K."/>
            <person name="Klappenbach J."/>
            <person name="Tiedje J."/>
            <person name="Richardson P."/>
        </authorList>
    </citation>
    <scope>NUCLEOTIDE SEQUENCE [LARGE SCALE GENOMIC DNA]</scope>
    <source>
        <strain>MR-4</strain>
    </source>
</reference>